<sequence>MNIDGYTRLAAVVAKPIKHSISPFIHNLAFKETGVNGVYVAWEIPEEDLAVTLENIKRYDMFGINLSMPYKQAVIPYLDSLTDSARLIGAVNTVIHQDGLLIGHNTDGIGFFKSLEKLRGFQVRNKRLTILGGGGASTAIIAQATLDGAKEITIFCRQQSLERTQASLTPIARATGVPMQILALDDSQLLQEHITNSDLLVNGTSVGMDGYSQPVPSTIRFPENLLVADVIYQPFETPLLKLAQSQGNPTINGLGMLLFQAAEAFQSWTGQEMPTDLIWDQLVQKYDIK</sequence>
<accession>A4W235</accession>
<gene>
    <name evidence="1" type="primary">aroE</name>
    <name type="ordered locus">SSU98_1266</name>
</gene>
<organism>
    <name type="scientific">Streptococcus suis (strain 98HAH33)</name>
    <dbReference type="NCBI Taxonomy" id="391296"/>
    <lineage>
        <taxon>Bacteria</taxon>
        <taxon>Bacillati</taxon>
        <taxon>Bacillota</taxon>
        <taxon>Bacilli</taxon>
        <taxon>Lactobacillales</taxon>
        <taxon>Streptococcaceae</taxon>
        <taxon>Streptococcus</taxon>
    </lineage>
</organism>
<evidence type="ECO:0000255" key="1">
    <source>
        <dbReference type="HAMAP-Rule" id="MF_00222"/>
    </source>
</evidence>
<proteinExistence type="inferred from homology"/>
<protein>
    <recommendedName>
        <fullName evidence="1">Shikimate dehydrogenase (NADP(+))</fullName>
        <shortName evidence="1">SDH</shortName>
        <ecNumber evidence="1">1.1.1.25</ecNumber>
    </recommendedName>
</protein>
<feature type="chain" id="PRO_1000021351" description="Shikimate dehydrogenase (NADP(+))">
    <location>
        <begin position="1"/>
        <end position="289"/>
    </location>
</feature>
<feature type="active site" description="Proton acceptor" evidence="1">
    <location>
        <position position="71"/>
    </location>
</feature>
<feature type="binding site" evidence="1">
    <location>
        <begin position="20"/>
        <end position="22"/>
    </location>
    <ligand>
        <name>shikimate</name>
        <dbReference type="ChEBI" id="CHEBI:36208"/>
    </ligand>
</feature>
<feature type="binding site" evidence="1">
    <location>
        <position position="67"/>
    </location>
    <ligand>
        <name>shikimate</name>
        <dbReference type="ChEBI" id="CHEBI:36208"/>
    </ligand>
</feature>
<feature type="binding site" evidence="1">
    <location>
        <position position="83"/>
    </location>
    <ligand>
        <name>NADP(+)</name>
        <dbReference type="ChEBI" id="CHEBI:58349"/>
    </ligand>
</feature>
<feature type="binding site" evidence="1">
    <location>
        <position position="92"/>
    </location>
    <ligand>
        <name>shikimate</name>
        <dbReference type="ChEBI" id="CHEBI:36208"/>
    </ligand>
</feature>
<feature type="binding site" evidence="1">
    <location>
        <position position="107"/>
    </location>
    <ligand>
        <name>shikimate</name>
        <dbReference type="ChEBI" id="CHEBI:36208"/>
    </ligand>
</feature>
<feature type="binding site" evidence="1">
    <location>
        <begin position="132"/>
        <end position="136"/>
    </location>
    <ligand>
        <name>NADP(+)</name>
        <dbReference type="ChEBI" id="CHEBI:58349"/>
    </ligand>
</feature>
<feature type="binding site" evidence="1">
    <location>
        <position position="230"/>
    </location>
    <ligand>
        <name>NADP(+)</name>
        <dbReference type="ChEBI" id="CHEBI:58349"/>
    </ligand>
</feature>
<feature type="binding site" evidence="1">
    <location>
        <position position="232"/>
    </location>
    <ligand>
        <name>shikimate</name>
        <dbReference type="ChEBI" id="CHEBI:36208"/>
    </ligand>
</feature>
<feature type="binding site" evidence="1">
    <location>
        <position position="253"/>
    </location>
    <ligand>
        <name>NADP(+)</name>
        <dbReference type="ChEBI" id="CHEBI:58349"/>
    </ligand>
</feature>
<reference key="1">
    <citation type="journal article" date="2007" name="PLoS ONE">
        <title>A glimpse of streptococcal toxic shock syndrome from comparative genomics of S. suis 2 Chinese isolates.</title>
        <authorList>
            <person name="Chen C."/>
            <person name="Tang J."/>
            <person name="Dong W."/>
            <person name="Wang C."/>
            <person name="Feng Y."/>
            <person name="Wang J."/>
            <person name="Zheng F."/>
            <person name="Pan X."/>
            <person name="Liu D."/>
            <person name="Li M."/>
            <person name="Song Y."/>
            <person name="Zhu X."/>
            <person name="Sun H."/>
            <person name="Feng T."/>
            <person name="Guo Z."/>
            <person name="Ju A."/>
            <person name="Ge J."/>
            <person name="Dong Y."/>
            <person name="Sun W."/>
            <person name="Jiang Y."/>
            <person name="Wang J."/>
            <person name="Yan J."/>
            <person name="Yang H."/>
            <person name="Wang X."/>
            <person name="Gao G.F."/>
            <person name="Yang R."/>
            <person name="Wang J."/>
            <person name="Yu J."/>
        </authorList>
    </citation>
    <scope>NUCLEOTIDE SEQUENCE [LARGE SCALE GENOMIC DNA]</scope>
    <source>
        <strain>98HAH33</strain>
    </source>
</reference>
<keyword id="KW-0028">Amino-acid biosynthesis</keyword>
<keyword id="KW-0057">Aromatic amino acid biosynthesis</keyword>
<keyword id="KW-0521">NADP</keyword>
<keyword id="KW-0560">Oxidoreductase</keyword>
<name>AROE_STRS2</name>
<comment type="function">
    <text evidence="1">Involved in the biosynthesis of the chorismate, which leads to the biosynthesis of aromatic amino acids. Catalyzes the reversible NADPH linked reduction of 3-dehydroshikimate (DHSA) to yield shikimate (SA).</text>
</comment>
<comment type="catalytic activity">
    <reaction evidence="1">
        <text>shikimate + NADP(+) = 3-dehydroshikimate + NADPH + H(+)</text>
        <dbReference type="Rhea" id="RHEA:17737"/>
        <dbReference type="ChEBI" id="CHEBI:15378"/>
        <dbReference type="ChEBI" id="CHEBI:16630"/>
        <dbReference type="ChEBI" id="CHEBI:36208"/>
        <dbReference type="ChEBI" id="CHEBI:57783"/>
        <dbReference type="ChEBI" id="CHEBI:58349"/>
        <dbReference type="EC" id="1.1.1.25"/>
    </reaction>
</comment>
<comment type="pathway">
    <text evidence="1">Metabolic intermediate biosynthesis; chorismate biosynthesis; chorismate from D-erythrose 4-phosphate and phosphoenolpyruvate: step 4/7.</text>
</comment>
<comment type="subunit">
    <text evidence="1">Homodimer.</text>
</comment>
<comment type="similarity">
    <text evidence="1">Belongs to the shikimate dehydrogenase family.</text>
</comment>
<dbReference type="EC" id="1.1.1.25" evidence="1"/>
<dbReference type="EMBL" id="CP000408">
    <property type="protein sequence ID" value="ABP92424.1"/>
    <property type="molecule type" value="Genomic_DNA"/>
</dbReference>
<dbReference type="SMR" id="A4W235"/>
<dbReference type="KEGG" id="ssv:SSU98_1266"/>
<dbReference type="HOGENOM" id="CLU_044063_4_4_9"/>
<dbReference type="UniPathway" id="UPA00053">
    <property type="reaction ID" value="UER00087"/>
</dbReference>
<dbReference type="GO" id="GO:0050661">
    <property type="term" value="F:NADP binding"/>
    <property type="evidence" value="ECO:0007669"/>
    <property type="project" value="InterPro"/>
</dbReference>
<dbReference type="GO" id="GO:0004764">
    <property type="term" value="F:shikimate 3-dehydrogenase (NADP+) activity"/>
    <property type="evidence" value="ECO:0007669"/>
    <property type="project" value="UniProtKB-UniRule"/>
</dbReference>
<dbReference type="GO" id="GO:0008652">
    <property type="term" value="P:amino acid biosynthetic process"/>
    <property type="evidence" value="ECO:0007669"/>
    <property type="project" value="UniProtKB-KW"/>
</dbReference>
<dbReference type="GO" id="GO:0009073">
    <property type="term" value="P:aromatic amino acid family biosynthetic process"/>
    <property type="evidence" value="ECO:0007669"/>
    <property type="project" value="UniProtKB-KW"/>
</dbReference>
<dbReference type="GO" id="GO:0009423">
    <property type="term" value="P:chorismate biosynthetic process"/>
    <property type="evidence" value="ECO:0007669"/>
    <property type="project" value="UniProtKB-UniRule"/>
</dbReference>
<dbReference type="GO" id="GO:0019632">
    <property type="term" value="P:shikimate metabolic process"/>
    <property type="evidence" value="ECO:0007669"/>
    <property type="project" value="InterPro"/>
</dbReference>
<dbReference type="CDD" id="cd01065">
    <property type="entry name" value="NAD_bind_Shikimate_DH"/>
    <property type="match status" value="1"/>
</dbReference>
<dbReference type="Gene3D" id="3.40.50.10860">
    <property type="entry name" value="Leucine Dehydrogenase, chain A, domain 1"/>
    <property type="match status" value="1"/>
</dbReference>
<dbReference type="Gene3D" id="3.40.50.720">
    <property type="entry name" value="NAD(P)-binding Rossmann-like Domain"/>
    <property type="match status" value="1"/>
</dbReference>
<dbReference type="HAMAP" id="MF_00222">
    <property type="entry name" value="Shikimate_DH_AroE"/>
    <property type="match status" value="1"/>
</dbReference>
<dbReference type="InterPro" id="IPR046346">
    <property type="entry name" value="Aminoacid_DH-like_N_sf"/>
</dbReference>
<dbReference type="InterPro" id="IPR036291">
    <property type="entry name" value="NAD(P)-bd_dom_sf"/>
</dbReference>
<dbReference type="InterPro" id="IPR041121">
    <property type="entry name" value="SDH_C"/>
</dbReference>
<dbReference type="InterPro" id="IPR011342">
    <property type="entry name" value="Shikimate_DH"/>
</dbReference>
<dbReference type="InterPro" id="IPR013708">
    <property type="entry name" value="Shikimate_DH-bd_N"/>
</dbReference>
<dbReference type="InterPro" id="IPR022893">
    <property type="entry name" value="Shikimate_DH_fam"/>
</dbReference>
<dbReference type="NCBIfam" id="TIGR00507">
    <property type="entry name" value="aroE"/>
    <property type="match status" value="1"/>
</dbReference>
<dbReference type="NCBIfam" id="NF001315">
    <property type="entry name" value="PRK00258.2-4"/>
    <property type="match status" value="1"/>
</dbReference>
<dbReference type="PANTHER" id="PTHR21089:SF1">
    <property type="entry name" value="BIFUNCTIONAL 3-DEHYDROQUINATE DEHYDRATASE_SHIKIMATE DEHYDROGENASE, CHLOROPLASTIC"/>
    <property type="match status" value="1"/>
</dbReference>
<dbReference type="PANTHER" id="PTHR21089">
    <property type="entry name" value="SHIKIMATE DEHYDROGENASE"/>
    <property type="match status" value="1"/>
</dbReference>
<dbReference type="Pfam" id="PF18317">
    <property type="entry name" value="SDH_C"/>
    <property type="match status" value="1"/>
</dbReference>
<dbReference type="Pfam" id="PF08501">
    <property type="entry name" value="Shikimate_dh_N"/>
    <property type="match status" value="1"/>
</dbReference>
<dbReference type="SUPFAM" id="SSF53223">
    <property type="entry name" value="Aminoacid dehydrogenase-like, N-terminal domain"/>
    <property type="match status" value="1"/>
</dbReference>
<dbReference type="SUPFAM" id="SSF51735">
    <property type="entry name" value="NAD(P)-binding Rossmann-fold domains"/>
    <property type="match status" value="1"/>
</dbReference>